<gene>
    <name evidence="1" type="primary">mscL</name>
    <name type="ordered locus">Arad_0821</name>
</gene>
<protein>
    <recommendedName>
        <fullName evidence="1">Large-conductance mechanosensitive channel</fullName>
    </recommendedName>
</protein>
<comment type="function">
    <text evidence="1">Channel that opens in response to stretch forces in the membrane lipid bilayer. May participate in the regulation of osmotic pressure changes within the cell.</text>
</comment>
<comment type="subunit">
    <text evidence="1">Homopentamer.</text>
</comment>
<comment type="subcellular location">
    <subcellularLocation>
        <location evidence="1">Cell inner membrane</location>
        <topology evidence="1">Multi-pass membrane protein</topology>
    </subcellularLocation>
</comment>
<comment type="similarity">
    <text evidence="1">Belongs to the MscL family.</text>
</comment>
<accession>B9J924</accession>
<organism>
    <name type="scientific">Rhizobium rhizogenes (strain K84 / ATCC BAA-868)</name>
    <name type="common">Agrobacterium radiobacter</name>
    <dbReference type="NCBI Taxonomy" id="311403"/>
    <lineage>
        <taxon>Bacteria</taxon>
        <taxon>Pseudomonadati</taxon>
        <taxon>Pseudomonadota</taxon>
        <taxon>Alphaproteobacteria</taxon>
        <taxon>Hyphomicrobiales</taxon>
        <taxon>Rhizobiaceae</taxon>
        <taxon>Rhizobium/Agrobacterium group</taxon>
        <taxon>Rhizobium</taxon>
    </lineage>
</organism>
<feature type="chain" id="PRO_1000191347" description="Large-conductance mechanosensitive channel">
    <location>
        <begin position="1"/>
        <end position="141"/>
    </location>
</feature>
<feature type="transmembrane region" description="Helical" evidence="1">
    <location>
        <begin position="14"/>
        <end position="34"/>
    </location>
</feature>
<feature type="transmembrane region" description="Helical" evidence="1">
    <location>
        <begin position="38"/>
        <end position="58"/>
    </location>
</feature>
<feature type="transmembrane region" description="Helical" evidence="1">
    <location>
        <begin position="81"/>
        <end position="101"/>
    </location>
</feature>
<dbReference type="EMBL" id="CP000628">
    <property type="protein sequence ID" value="ACM25426.1"/>
    <property type="molecule type" value="Genomic_DNA"/>
</dbReference>
<dbReference type="RefSeq" id="WP_007695655.1">
    <property type="nucleotide sequence ID" value="NC_011985.1"/>
</dbReference>
<dbReference type="STRING" id="311403.Arad_0821"/>
<dbReference type="GeneID" id="86847244"/>
<dbReference type="KEGG" id="ara:Arad_0821"/>
<dbReference type="eggNOG" id="COG1970">
    <property type="taxonomic scope" value="Bacteria"/>
</dbReference>
<dbReference type="HOGENOM" id="CLU_095787_0_1_5"/>
<dbReference type="Proteomes" id="UP000001600">
    <property type="component" value="Chromosome 1"/>
</dbReference>
<dbReference type="GO" id="GO:0005886">
    <property type="term" value="C:plasma membrane"/>
    <property type="evidence" value="ECO:0007669"/>
    <property type="project" value="UniProtKB-SubCell"/>
</dbReference>
<dbReference type="GO" id="GO:0008381">
    <property type="term" value="F:mechanosensitive monoatomic ion channel activity"/>
    <property type="evidence" value="ECO:0007669"/>
    <property type="project" value="UniProtKB-UniRule"/>
</dbReference>
<dbReference type="Gene3D" id="1.10.1200.120">
    <property type="entry name" value="Large-conductance mechanosensitive channel, MscL, domain 1"/>
    <property type="match status" value="1"/>
</dbReference>
<dbReference type="HAMAP" id="MF_00115">
    <property type="entry name" value="MscL"/>
    <property type="match status" value="1"/>
</dbReference>
<dbReference type="InterPro" id="IPR019823">
    <property type="entry name" value="Mechanosensitive_channel_CS"/>
</dbReference>
<dbReference type="InterPro" id="IPR001185">
    <property type="entry name" value="MS_channel"/>
</dbReference>
<dbReference type="InterPro" id="IPR037673">
    <property type="entry name" value="MSC/AndL"/>
</dbReference>
<dbReference type="InterPro" id="IPR036019">
    <property type="entry name" value="MscL_channel"/>
</dbReference>
<dbReference type="NCBIfam" id="TIGR00220">
    <property type="entry name" value="mscL"/>
    <property type="match status" value="1"/>
</dbReference>
<dbReference type="NCBIfam" id="NF001843">
    <property type="entry name" value="PRK00567.1-4"/>
    <property type="match status" value="1"/>
</dbReference>
<dbReference type="NCBIfam" id="NF010557">
    <property type="entry name" value="PRK13952.1"/>
    <property type="match status" value="1"/>
</dbReference>
<dbReference type="PANTHER" id="PTHR30266:SF2">
    <property type="entry name" value="LARGE-CONDUCTANCE MECHANOSENSITIVE CHANNEL"/>
    <property type="match status" value="1"/>
</dbReference>
<dbReference type="PANTHER" id="PTHR30266">
    <property type="entry name" value="MECHANOSENSITIVE CHANNEL MSCL"/>
    <property type="match status" value="1"/>
</dbReference>
<dbReference type="Pfam" id="PF01741">
    <property type="entry name" value="MscL"/>
    <property type="match status" value="1"/>
</dbReference>
<dbReference type="PRINTS" id="PR01264">
    <property type="entry name" value="MECHCHANNEL"/>
</dbReference>
<dbReference type="SUPFAM" id="SSF81330">
    <property type="entry name" value="Gated mechanosensitive channel"/>
    <property type="match status" value="1"/>
</dbReference>
<dbReference type="PROSITE" id="PS01327">
    <property type="entry name" value="MSCL"/>
    <property type="match status" value="1"/>
</dbReference>
<reference key="1">
    <citation type="journal article" date="2009" name="J. Bacteriol.">
        <title>Genome sequences of three Agrobacterium biovars help elucidate the evolution of multichromosome genomes in bacteria.</title>
        <authorList>
            <person name="Slater S.C."/>
            <person name="Goldman B.S."/>
            <person name="Goodner B."/>
            <person name="Setubal J.C."/>
            <person name="Farrand S.K."/>
            <person name="Nester E.W."/>
            <person name="Burr T.J."/>
            <person name="Banta L."/>
            <person name="Dickerman A.W."/>
            <person name="Paulsen I."/>
            <person name="Otten L."/>
            <person name="Suen G."/>
            <person name="Welch R."/>
            <person name="Almeida N.F."/>
            <person name="Arnold F."/>
            <person name="Burton O.T."/>
            <person name="Du Z."/>
            <person name="Ewing A."/>
            <person name="Godsy E."/>
            <person name="Heisel S."/>
            <person name="Houmiel K.L."/>
            <person name="Jhaveri J."/>
            <person name="Lu J."/>
            <person name="Miller N.M."/>
            <person name="Norton S."/>
            <person name="Chen Q."/>
            <person name="Phoolcharoen W."/>
            <person name="Ohlin V."/>
            <person name="Ondrusek D."/>
            <person name="Pride N."/>
            <person name="Stricklin S.L."/>
            <person name="Sun J."/>
            <person name="Wheeler C."/>
            <person name="Wilson L."/>
            <person name="Zhu H."/>
            <person name="Wood D.W."/>
        </authorList>
    </citation>
    <scope>NUCLEOTIDE SEQUENCE [LARGE SCALE GENOMIC DNA]</scope>
    <source>
        <strain>K84 / ATCC BAA-868</strain>
    </source>
</reference>
<sequence>MLNEFKAFIAKGNVMDLAVGVIIGGAFGGIVKSLVDDIIMPIVGAIFGGFDFSNYFLGLSSAVNAPTLAGARAQGAVLAYGSFITVLINFLILAWIIFLMVKGVNTLRAQVERKDNKVAEAAPPPADVQLLTEIRDLLAKR</sequence>
<keyword id="KW-0997">Cell inner membrane</keyword>
<keyword id="KW-1003">Cell membrane</keyword>
<keyword id="KW-0407">Ion channel</keyword>
<keyword id="KW-0406">Ion transport</keyword>
<keyword id="KW-0472">Membrane</keyword>
<keyword id="KW-0812">Transmembrane</keyword>
<keyword id="KW-1133">Transmembrane helix</keyword>
<keyword id="KW-0813">Transport</keyword>
<evidence type="ECO:0000255" key="1">
    <source>
        <dbReference type="HAMAP-Rule" id="MF_00115"/>
    </source>
</evidence>
<name>MSCL_RHIR8</name>
<proteinExistence type="inferred from homology"/>